<feature type="chain" id="PRO_1000163978" description="Ornithine carbamoyltransferase">
    <location>
        <begin position="1"/>
        <end position="308"/>
    </location>
</feature>
<feature type="binding site" evidence="2">
    <location>
        <begin position="56"/>
        <end position="59"/>
    </location>
    <ligand>
        <name>carbamoyl phosphate</name>
        <dbReference type="ChEBI" id="CHEBI:58228"/>
    </ligand>
</feature>
<feature type="binding site" evidence="2">
    <location>
        <position position="83"/>
    </location>
    <ligand>
        <name>carbamoyl phosphate</name>
        <dbReference type="ChEBI" id="CHEBI:58228"/>
    </ligand>
</feature>
<feature type="binding site" evidence="2">
    <location>
        <position position="107"/>
    </location>
    <ligand>
        <name>carbamoyl phosphate</name>
        <dbReference type="ChEBI" id="CHEBI:58228"/>
    </ligand>
</feature>
<feature type="binding site" evidence="2">
    <location>
        <begin position="134"/>
        <end position="137"/>
    </location>
    <ligand>
        <name>carbamoyl phosphate</name>
        <dbReference type="ChEBI" id="CHEBI:58228"/>
    </ligand>
</feature>
<feature type="binding site" evidence="2">
    <location>
        <position position="165"/>
    </location>
    <ligand>
        <name>L-ornithine</name>
        <dbReference type="ChEBI" id="CHEBI:46911"/>
    </ligand>
</feature>
<feature type="binding site" evidence="2">
    <location>
        <position position="225"/>
    </location>
    <ligand>
        <name>L-ornithine</name>
        <dbReference type="ChEBI" id="CHEBI:46911"/>
    </ligand>
</feature>
<feature type="binding site" evidence="2">
    <location>
        <begin position="229"/>
        <end position="230"/>
    </location>
    <ligand>
        <name>L-ornithine</name>
        <dbReference type="ChEBI" id="CHEBI:46911"/>
    </ligand>
</feature>
<feature type="binding site" evidence="2">
    <location>
        <begin position="266"/>
        <end position="267"/>
    </location>
    <ligand>
        <name>carbamoyl phosphate</name>
        <dbReference type="ChEBI" id="CHEBI:58228"/>
    </ligand>
</feature>
<feature type="binding site" evidence="2">
    <location>
        <position position="294"/>
    </location>
    <ligand>
        <name>carbamoyl phosphate</name>
        <dbReference type="ChEBI" id="CHEBI:58228"/>
    </ligand>
</feature>
<accession>Q3J4X5</accession>
<proteinExistence type="inferred from homology"/>
<organism>
    <name type="scientific">Cereibacter sphaeroides (strain ATCC 17023 / DSM 158 / JCM 6121 / CCUG 31486 / LMG 2827 / NBRC 12203 / NCIMB 8253 / ATH 2.4.1.)</name>
    <name type="common">Rhodobacter sphaeroides</name>
    <dbReference type="NCBI Taxonomy" id="272943"/>
    <lineage>
        <taxon>Bacteria</taxon>
        <taxon>Pseudomonadati</taxon>
        <taxon>Pseudomonadota</taxon>
        <taxon>Alphaproteobacteria</taxon>
        <taxon>Rhodobacterales</taxon>
        <taxon>Paracoccaceae</taxon>
        <taxon>Cereibacter</taxon>
    </lineage>
</organism>
<keyword id="KW-0028">Amino-acid biosynthesis</keyword>
<keyword id="KW-0055">Arginine biosynthesis</keyword>
<keyword id="KW-0963">Cytoplasm</keyword>
<keyword id="KW-1185">Reference proteome</keyword>
<keyword id="KW-0808">Transferase</keyword>
<reference key="1">
    <citation type="submission" date="2005-09" db="EMBL/GenBank/DDBJ databases">
        <title>Complete sequence of chromosome 1 of Rhodobacter sphaeroides 2.4.1.</title>
        <authorList>
            <person name="Copeland A."/>
            <person name="Lucas S."/>
            <person name="Lapidus A."/>
            <person name="Barry K."/>
            <person name="Detter J.C."/>
            <person name="Glavina T."/>
            <person name="Hammon N."/>
            <person name="Israni S."/>
            <person name="Pitluck S."/>
            <person name="Richardson P."/>
            <person name="Mackenzie C."/>
            <person name="Choudhary M."/>
            <person name="Larimer F."/>
            <person name="Hauser L.J."/>
            <person name="Land M."/>
            <person name="Donohue T.J."/>
            <person name="Kaplan S."/>
        </authorList>
    </citation>
    <scope>NUCLEOTIDE SEQUENCE [LARGE SCALE GENOMIC DNA]</scope>
    <source>
        <strain>ATCC 17023 / DSM 158 / JCM 6121 / CCUG 31486 / LMG 2827 / NBRC 12203 / NCIMB 8253 / ATH 2.4.1.</strain>
    </source>
</reference>
<name>OTC_CERS4</name>
<dbReference type="EC" id="2.1.3.3" evidence="2"/>
<dbReference type="EMBL" id="CP000143">
    <property type="protein sequence ID" value="ABA78159.1"/>
    <property type="molecule type" value="Genomic_DNA"/>
</dbReference>
<dbReference type="RefSeq" id="WP_011337153.1">
    <property type="nucleotide sequence ID" value="NC_007493.2"/>
</dbReference>
<dbReference type="RefSeq" id="YP_352060.1">
    <property type="nucleotide sequence ID" value="NC_007493.2"/>
</dbReference>
<dbReference type="SMR" id="Q3J4X5"/>
<dbReference type="STRING" id="272943.RSP_2009"/>
<dbReference type="EnsemblBacteria" id="ABA78159">
    <property type="protein sequence ID" value="ABA78159"/>
    <property type="gene ID" value="RSP_2009"/>
</dbReference>
<dbReference type="GeneID" id="3719342"/>
<dbReference type="KEGG" id="rsp:RSP_2009"/>
<dbReference type="PATRIC" id="fig|272943.9.peg.898"/>
<dbReference type="eggNOG" id="COG0078">
    <property type="taxonomic scope" value="Bacteria"/>
</dbReference>
<dbReference type="OrthoDB" id="9802587at2"/>
<dbReference type="PhylomeDB" id="Q3J4X5"/>
<dbReference type="UniPathway" id="UPA00068">
    <property type="reaction ID" value="UER00112"/>
</dbReference>
<dbReference type="Proteomes" id="UP000002703">
    <property type="component" value="Chromosome 1"/>
</dbReference>
<dbReference type="GO" id="GO:0005737">
    <property type="term" value="C:cytoplasm"/>
    <property type="evidence" value="ECO:0007669"/>
    <property type="project" value="UniProtKB-SubCell"/>
</dbReference>
<dbReference type="GO" id="GO:0016597">
    <property type="term" value="F:amino acid binding"/>
    <property type="evidence" value="ECO:0007669"/>
    <property type="project" value="InterPro"/>
</dbReference>
<dbReference type="GO" id="GO:0004585">
    <property type="term" value="F:ornithine carbamoyltransferase activity"/>
    <property type="evidence" value="ECO:0007669"/>
    <property type="project" value="UniProtKB-UniRule"/>
</dbReference>
<dbReference type="GO" id="GO:0042450">
    <property type="term" value="P:arginine biosynthetic process via ornithine"/>
    <property type="evidence" value="ECO:0007669"/>
    <property type="project" value="TreeGrafter"/>
</dbReference>
<dbReference type="GO" id="GO:0019240">
    <property type="term" value="P:citrulline biosynthetic process"/>
    <property type="evidence" value="ECO:0007669"/>
    <property type="project" value="TreeGrafter"/>
</dbReference>
<dbReference type="GO" id="GO:0006526">
    <property type="term" value="P:L-arginine biosynthetic process"/>
    <property type="evidence" value="ECO:0007669"/>
    <property type="project" value="UniProtKB-UniRule"/>
</dbReference>
<dbReference type="FunFam" id="3.40.50.1370:FF:000008">
    <property type="entry name" value="Ornithine carbamoyltransferase"/>
    <property type="match status" value="1"/>
</dbReference>
<dbReference type="Gene3D" id="3.40.50.1370">
    <property type="entry name" value="Aspartate/ornithine carbamoyltransferase"/>
    <property type="match status" value="2"/>
</dbReference>
<dbReference type="HAMAP" id="MF_01109">
    <property type="entry name" value="OTCase"/>
    <property type="match status" value="1"/>
</dbReference>
<dbReference type="InterPro" id="IPR006132">
    <property type="entry name" value="Asp/Orn_carbamoyltranf_P-bd"/>
</dbReference>
<dbReference type="InterPro" id="IPR006130">
    <property type="entry name" value="Asp/Orn_carbamoylTrfase"/>
</dbReference>
<dbReference type="InterPro" id="IPR036901">
    <property type="entry name" value="Asp/Orn_carbamoylTrfase_sf"/>
</dbReference>
<dbReference type="InterPro" id="IPR006131">
    <property type="entry name" value="Asp_carbamoyltransf_Asp/Orn-bd"/>
</dbReference>
<dbReference type="InterPro" id="IPR002292">
    <property type="entry name" value="Orn/put_carbamltrans"/>
</dbReference>
<dbReference type="InterPro" id="IPR024904">
    <property type="entry name" value="OTCase_ArgI"/>
</dbReference>
<dbReference type="NCBIfam" id="TIGR00658">
    <property type="entry name" value="orni_carb_tr"/>
    <property type="match status" value="1"/>
</dbReference>
<dbReference type="NCBIfam" id="NF001986">
    <property type="entry name" value="PRK00779.1"/>
    <property type="match status" value="1"/>
</dbReference>
<dbReference type="PANTHER" id="PTHR45753">
    <property type="entry name" value="ORNITHINE CARBAMOYLTRANSFERASE, MITOCHONDRIAL"/>
    <property type="match status" value="1"/>
</dbReference>
<dbReference type="PANTHER" id="PTHR45753:SF3">
    <property type="entry name" value="ORNITHINE TRANSCARBAMYLASE, MITOCHONDRIAL"/>
    <property type="match status" value="1"/>
</dbReference>
<dbReference type="Pfam" id="PF00185">
    <property type="entry name" value="OTCace"/>
    <property type="match status" value="1"/>
</dbReference>
<dbReference type="Pfam" id="PF02729">
    <property type="entry name" value="OTCace_N"/>
    <property type="match status" value="1"/>
</dbReference>
<dbReference type="PRINTS" id="PR00100">
    <property type="entry name" value="AOTCASE"/>
</dbReference>
<dbReference type="PRINTS" id="PR00102">
    <property type="entry name" value="OTCASE"/>
</dbReference>
<dbReference type="SUPFAM" id="SSF53671">
    <property type="entry name" value="Aspartate/ornithine carbamoyltransferase"/>
    <property type="match status" value="1"/>
</dbReference>
<dbReference type="PROSITE" id="PS00097">
    <property type="entry name" value="CARBAMOYLTRANSFERASE"/>
    <property type="match status" value="1"/>
</dbReference>
<gene>
    <name evidence="2" type="primary">argF</name>
    <name type="ordered locus">RHOS4_05910</name>
    <name type="ORF">RSP_2009</name>
</gene>
<sequence length="308" mass="34308">MNHFLDIHKTDTAELRQMMDSAHAMKAARKGRPKGQLDEDQPLAGRMVALIFEKPSTRTRVSFDVGVRQMGGQTMVLSGKEMQLGHGETIADTARVLSRYVDLIMIRTFEEATLLEMAEHATVPVINGLTNRTHPCQIMADVMTYEEHRGPIAGRKVVWAGDGNNVCASFLHAAGQFGFDFTFTGPSTLDPEAEFVGYAREKGRRVSIERDPAKAVAGADLVVTDTWVSMHDPQSARERRHNQLRPYQVNETLMAQAKPDALFMHCLPAHRDDEATSAVMDGPHSVIFDEAENRLHAQKAIMRWCLGL</sequence>
<comment type="function">
    <text evidence="1">Reversibly catalyzes the transfer of the carbamoyl group from carbamoyl phosphate (CP) to the N(epsilon) atom of ornithine (ORN) to produce L-citrulline.</text>
</comment>
<comment type="catalytic activity">
    <reaction evidence="2">
        <text>carbamoyl phosphate + L-ornithine = L-citrulline + phosphate + H(+)</text>
        <dbReference type="Rhea" id="RHEA:19513"/>
        <dbReference type="ChEBI" id="CHEBI:15378"/>
        <dbReference type="ChEBI" id="CHEBI:43474"/>
        <dbReference type="ChEBI" id="CHEBI:46911"/>
        <dbReference type="ChEBI" id="CHEBI:57743"/>
        <dbReference type="ChEBI" id="CHEBI:58228"/>
        <dbReference type="EC" id="2.1.3.3"/>
    </reaction>
</comment>
<comment type="pathway">
    <text evidence="2">Amino-acid biosynthesis; L-arginine biosynthesis; L-arginine from L-ornithine and carbamoyl phosphate: step 1/3.</text>
</comment>
<comment type="subcellular location">
    <subcellularLocation>
        <location evidence="2">Cytoplasm</location>
    </subcellularLocation>
</comment>
<comment type="similarity">
    <text evidence="2">Belongs to the aspartate/ornithine carbamoyltransferase superfamily. OTCase family.</text>
</comment>
<evidence type="ECO:0000250" key="1"/>
<evidence type="ECO:0000255" key="2">
    <source>
        <dbReference type="HAMAP-Rule" id="MF_01109"/>
    </source>
</evidence>
<protein>
    <recommendedName>
        <fullName evidence="2">Ornithine carbamoyltransferase</fullName>
        <shortName evidence="2">OTCase</shortName>
        <ecNumber evidence="2">2.1.3.3</ecNumber>
    </recommendedName>
</protein>